<name>Y1240_HAEIN</name>
<proteinExistence type="inferred from homology"/>
<accession>P45122</accession>
<organism>
    <name type="scientific">Haemophilus influenzae (strain ATCC 51907 / DSM 11121 / KW20 / Rd)</name>
    <dbReference type="NCBI Taxonomy" id="71421"/>
    <lineage>
        <taxon>Bacteria</taxon>
        <taxon>Pseudomonadati</taxon>
        <taxon>Pseudomonadota</taxon>
        <taxon>Gammaproteobacteria</taxon>
        <taxon>Pasteurellales</taxon>
        <taxon>Pasteurellaceae</taxon>
        <taxon>Haemophilus</taxon>
    </lineage>
</organism>
<reference key="1">
    <citation type="journal article" date="1995" name="Science">
        <title>Whole-genome random sequencing and assembly of Haemophilus influenzae Rd.</title>
        <authorList>
            <person name="Fleischmann R.D."/>
            <person name="Adams M.D."/>
            <person name="White O."/>
            <person name="Clayton R.A."/>
            <person name="Kirkness E.F."/>
            <person name="Kerlavage A.R."/>
            <person name="Bult C.J."/>
            <person name="Tomb J.-F."/>
            <person name="Dougherty B.A."/>
            <person name="Merrick J.M."/>
            <person name="McKenney K."/>
            <person name="Sutton G.G."/>
            <person name="FitzHugh W."/>
            <person name="Fields C.A."/>
            <person name="Gocayne J.D."/>
            <person name="Scott J.D."/>
            <person name="Shirley R."/>
            <person name="Liu L.-I."/>
            <person name="Glodek A."/>
            <person name="Kelley J.M."/>
            <person name="Weidman J.F."/>
            <person name="Phillips C.A."/>
            <person name="Spriggs T."/>
            <person name="Hedblom E."/>
            <person name="Cotton M.D."/>
            <person name="Utterback T.R."/>
            <person name="Hanna M.C."/>
            <person name="Nguyen D.T."/>
            <person name="Saudek D.M."/>
            <person name="Brandon R.C."/>
            <person name="Fine L.D."/>
            <person name="Fritchman J.L."/>
            <person name="Fuhrmann J.L."/>
            <person name="Geoghagen N.S.M."/>
            <person name="Gnehm C.L."/>
            <person name="McDonald L.A."/>
            <person name="Small K.V."/>
            <person name="Fraser C.M."/>
            <person name="Smith H.O."/>
            <person name="Venter J.C."/>
        </authorList>
    </citation>
    <scope>NUCLEOTIDE SEQUENCE [LARGE SCALE GENOMIC DNA]</scope>
    <source>
        <strain>ATCC 51907 / DSM 11121 / KW20 / Rd</strain>
    </source>
</reference>
<evidence type="ECO:0000255" key="1"/>
<evidence type="ECO:0000305" key="2"/>
<feature type="chain" id="PRO_0000166302" description="UPF0126 membrane protein HI_1240">
    <location>
        <begin position="1"/>
        <end position="220"/>
    </location>
</feature>
<feature type="transmembrane region" description="Helical" evidence="1">
    <location>
        <begin position="26"/>
        <end position="46"/>
    </location>
</feature>
<feature type="transmembrane region" description="Helical" evidence="1">
    <location>
        <begin position="65"/>
        <end position="85"/>
    </location>
</feature>
<feature type="transmembrane region" description="Helical" evidence="1">
    <location>
        <begin position="92"/>
        <end position="112"/>
    </location>
</feature>
<feature type="transmembrane region" description="Helical" evidence="1">
    <location>
        <begin position="116"/>
        <end position="136"/>
    </location>
</feature>
<feature type="transmembrane region" description="Helical" evidence="1">
    <location>
        <begin position="152"/>
        <end position="172"/>
    </location>
</feature>
<feature type="transmembrane region" description="Helical" evidence="1">
    <location>
        <begin position="175"/>
        <end position="195"/>
    </location>
</feature>
<dbReference type="EMBL" id="L42023">
    <property type="protein sequence ID" value="AAC22893.1"/>
    <property type="molecule type" value="Genomic_DNA"/>
</dbReference>
<dbReference type="PIR" id="E64169">
    <property type="entry name" value="E64169"/>
</dbReference>
<dbReference type="RefSeq" id="NP_439396.1">
    <property type="nucleotide sequence ID" value="NC_000907.1"/>
</dbReference>
<dbReference type="SMR" id="P45122"/>
<dbReference type="STRING" id="71421.HI_1240"/>
<dbReference type="EnsemblBacteria" id="AAC22893">
    <property type="protein sequence ID" value="AAC22893"/>
    <property type="gene ID" value="HI_1240"/>
</dbReference>
<dbReference type="KEGG" id="hin:HI_1240"/>
<dbReference type="PATRIC" id="fig|71421.8.peg.1292"/>
<dbReference type="eggNOG" id="COG2860">
    <property type="taxonomic scope" value="Bacteria"/>
</dbReference>
<dbReference type="HOGENOM" id="CLU_064906_2_0_6"/>
<dbReference type="OrthoDB" id="9791874at2"/>
<dbReference type="PhylomeDB" id="P45122"/>
<dbReference type="BioCyc" id="HINF71421:G1GJ1-1270-MONOMER"/>
<dbReference type="Proteomes" id="UP000000579">
    <property type="component" value="Chromosome"/>
</dbReference>
<dbReference type="GO" id="GO:0005886">
    <property type="term" value="C:plasma membrane"/>
    <property type="evidence" value="ECO:0000318"/>
    <property type="project" value="GO_Central"/>
</dbReference>
<dbReference type="InterPro" id="IPR005115">
    <property type="entry name" value="Gly_transporter"/>
</dbReference>
<dbReference type="PANTHER" id="PTHR30506">
    <property type="entry name" value="INNER MEMBRANE PROTEIN"/>
    <property type="match status" value="1"/>
</dbReference>
<dbReference type="PANTHER" id="PTHR30506:SF3">
    <property type="entry name" value="UPF0126 INNER MEMBRANE PROTEIN YADS-RELATED"/>
    <property type="match status" value="1"/>
</dbReference>
<dbReference type="Pfam" id="PF03458">
    <property type="entry name" value="Gly_transporter"/>
    <property type="match status" value="2"/>
</dbReference>
<protein>
    <recommendedName>
        <fullName>UPF0126 membrane protein HI_1240</fullName>
    </recommendedName>
</protein>
<comment type="subcellular location">
    <subcellularLocation>
        <location evidence="2">Cell membrane</location>
        <topology evidence="2">Multi-pass membrane protein</topology>
    </subcellularLocation>
</comment>
<comment type="similarity">
    <text evidence="2">Belongs to the UPF0126 family.</text>
</comment>
<sequence length="220" mass="24228">MLLSILYIIGITAEGMTGALAAGREKMDIFGVIIIASVTAIGGGSVRDVLLGHYPLGWVKHPEYFLMVASAAVITVYVAPFINHFMRYFRTIFLVLDAMGLVVYSIIGAQIAMDMGHSLTIVCIAGCITGAFGGVLRDMLCNRIPLVFQKELYASIALFATLTYYALSTLQVEHTLAVLLTLINSFTLRLLAIHFEWGLPVFNYQELTSEEQDKQPNKKK</sequence>
<gene>
    <name type="ordered locus">HI_1240</name>
</gene>
<keyword id="KW-1003">Cell membrane</keyword>
<keyword id="KW-0472">Membrane</keyword>
<keyword id="KW-1185">Reference proteome</keyword>
<keyword id="KW-0812">Transmembrane</keyword>
<keyword id="KW-1133">Transmembrane helix</keyword>